<feature type="chain" id="PRO_0000461162" description="Peroxisomal membrane protein PEX3">
    <location>
        <begin position="1"/>
        <end position="455"/>
    </location>
</feature>
<feature type="transmembrane region" description="Helical" evidence="1">
    <location>
        <begin position="155"/>
        <end position="171"/>
    </location>
</feature>
<feature type="region of interest" description="Disordered" evidence="2">
    <location>
        <begin position="113"/>
        <end position="135"/>
    </location>
</feature>
<feature type="compositionally biased region" description="Polar residues" evidence="2">
    <location>
        <begin position="113"/>
        <end position="125"/>
    </location>
</feature>
<organism>
    <name type="scientific">Komagataella phaffii (strain GS115 / ATCC 20864)</name>
    <name type="common">Yeast</name>
    <name type="synonym">Pichia pastoris</name>
    <dbReference type="NCBI Taxonomy" id="644223"/>
    <lineage>
        <taxon>Eukaryota</taxon>
        <taxon>Fungi</taxon>
        <taxon>Dikarya</taxon>
        <taxon>Ascomycota</taxon>
        <taxon>Saccharomycotina</taxon>
        <taxon>Pichiomycetes</taxon>
        <taxon>Pichiales</taxon>
        <taxon>Pichiaceae</taxon>
        <taxon>Komagataella</taxon>
    </lineage>
</organism>
<sequence>MLEYTAGLIRRNKKKFLISSGIIGVGYYVTKTINNKIQEFQNRIREENFAKEQIKRRFHQTQSDCYMTFLSLLPVLCEPIMDDLPVETITKQLQIRRLEKQIGNKDVKNSGSTVLSDDFSTSQEGAISEDTNKPPELKSKNQLWQELKIKAITRFLTLIYCESLLIVFLHLQLNILSRKSYLETAIRLASETQGIDLVDQESNGDFSGNTQDENLSEQAFLSFSWWLLNKGWLEIKNKIEPCVEQHFGGINPRQQLKINEFAELLNKCQNCIDLKVLNLTEDDIHLGVGVIEDQSQPVGRKSTNFITNALLPPKEFEFFLLQQTNDLDFLSRFNNNIVNTESLNMLLDELNNYLNNADINLIVNKLATLGITKVLDEIVLNLLQKNRPNPISDMNIRDIDLNDFPPYKLAALLANITKQSISLTNNSVENPILADLNNLPELNDLSASVYSNFDP</sequence>
<evidence type="ECO:0000255" key="1"/>
<evidence type="ECO:0000256" key="2">
    <source>
        <dbReference type="SAM" id="MobiDB-lite"/>
    </source>
</evidence>
<evidence type="ECO:0000269" key="3">
    <source>
    </source>
</evidence>
<evidence type="ECO:0000269" key="4">
    <source>
    </source>
</evidence>
<evidence type="ECO:0000269" key="5">
    <source>
    </source>
</evidence>
<evidence type="ECO:0000269" key="6">
    <source>
    </source>
</evidence>
<evidence type="ECO:0000269" key="7">
    <source>
    </source>
</evidence>
<evidence type="ECO:0000269" key="8">
    <source>
    </source>
</evidence>
<evidence type="ECO:0000269" key="9">
    <source>
    </source>
</evidence>
<evidence type="ECO:0000303" key="10">
    <source>
    </source>
</evidence>
<evidence type="ECO:0000303" key="11">
    <source>
    </source>
</evidence>
<evidence type="ECO:0000305" key="12"/>
<accession>C4R6F0</accession>
<dbReference type="EMBL" id="FN392321">
    <property type="protein sequence ID" value="CAY71136.1"/>
    <property type="molecule type" value="Genomic_DNA"/>
</dbReference>
<dbReference type="RefSeq" id="XP_002493315.1">
    <property type="nucleotide sequence ID" value="XM_002493270.1"/>
</dbReference>
<dbReference type="SMR" id="C4R6F0"/>
<dbReference type="FunCoup" id="C4R6F0">
    <property type="interactions" value="196"/>
</dbReference>
<dbReference type="STRING" id="644223.C4R6F0"/>
<dbReference type="EnsemblFungi" id="CAY71136">
    <property type="protein sequence ID" value="CAY71136"/>
    <property type="gene ID" value="PAS_chr3_1073"/>
</dbReference>
<dbReference type="GeneID" id="8200033"/>
<dbReference type="KEGG" id="ppa:PAS_chr3_1073"/>
<dbReference type="eggNOG" id="KOG4444">
    <property type="taxonomic scope" value="Eukaryota"/>
</dbReference>
<dbReference type="HOGENOM" id="CLU_017002_0_0_1"/>
<dbReference type="InParanoid" id="C4R6F0"/>
<dbReference type="OMA" id="WLYKQQL"/>
<dbReference type="OrthoDB" id="45930at2759"/>
<dbReference type="Proteomes" id="UP000000314">
    <property type="component" value="Chromosome 3"/>
</dbReference>
<dbReference type="GO" id="GO:0005778">
    <property type="term" value="C:peroxisomal membrane"/>
    <property type="evidence" value="ECO:0007669"/>
    <property type="project" value="UniProtKB-SubCell"/>
</dbReference>
<dbReference type="GO" id="GO:0030674">
    <property type="term" value="F:protein-macromolecule adaptor activity"/>
    <property type="evidence" value="ECO:0007669"/>
    <property type="project" value="TreeGrafter"/>
</dbReference>
<dbReference type="GO" id="GO:0045046">
    <property type="term" value="P:protein import into peroxisome membrane"/>
    <property type="evidence" value="ECO:0007669"/>
    <property type="project" value="TreeGrafter"/>
</dbReference>
<dbReference type="InterPro" id="IPR006966">
    <property type="entry name" value="Peroxin-3"/>
</dbReference>
<dbReference type="PANTHER" id="PTHR28080">
    <property type="entry name" value="PEROXISOMAL BIOGENESIS FACTOR 3"/>
    <property type="match status" value="1"/>
</dbReference>
<dbReference type="PANTHER" id="PTHR28080:SF1">
    <property type="entry name" value="PEROXISOMAL BIOGENESIS FACTOR 3"/>
    <property type="match status" value="1"/>
</dbReference>
<dbReference type="Pfam" id="PF04882">
    <property type="entry name" value="Peroxin-3"/>
    <property type="match status" value="1"/>
</dbReference>
<keyword id="KW-0472">Membrane</keyword>
<keyword id="KW-0576">Peroxisome</keyword>
<keyword id="KW-0962">Peroxisome biogenesis</keyword>
<keyword id="KW-1185">Reference proteome</keyword>
<keyword id="KW-0812">Transmembrane</keyword>
<keyword id="KW-1133">Transmembrane helix</keyword>
<comment type="function">
    <text evidence="3 4 6 8 9">Peroxisomal membrane protein required for peroxisome biosynthesis (PubMed:10359594, PubMed:8702562). Shared component of both the peroxisomal docking complex and the peroxisomal translocation complex (PubMed:12121419). The two types of peroxisomal matrix targeting signals, PTS1 and PTS2, are first recognized in the cytosol by their receptors PEX5 and PEX7, respectively, which then carry the cargo to the peroxisomal membrane. The peroxisomal targeting signal (PTS) receptor-cargo complexes interact with peroxisomal membrane protein (PMP) components of the docking complex. They have then additional downstream interactions with the translocation complex, leading to the transport of fully folded and oligomerized cargo into the peroxisome matrix (PubMed:12121419). PEX3 acts as an anchoring site for PEX19 on the peroxisomal membrane and thus plays a crucial role in the assembly of the peroxisomal translocation complex (PubMed:10359594). Is also essential for the interaction between the two complexes (PubMed:10359594). Finally. PEX3 activates selective autophagy of peroxisomes (pexophagy) via interaction with the pexophagy receptor ATG30 (PubMed:25694426, PubMed:29260977).</text>
</comment>
<comment type="subunit">
    <text evidence="3 4 6 7 8">Component of the peroxisomal docking complex, composed of at least PEX3, PEX13, PEX14 and PEX17 (PubMed:12121419). Component of the peroxisomal translocation complex, composed of at least PEX3, PEX2, PEX10 and PEX12 (PubMed:12121419). Interacts with PEX19 (PubMed:10359594, PubMed:28526747). Interacts with the pexophagy receptor ATG30 (PubMed:25694426, PubMed:29260977).</text>
</comment>
<comment type="subcellular location">
    <subcellularLocation>
        <location evidence="3 5 9">Peroxisome membrane</location>
        <topology evidence="1">Single-pass membrane protein</topology>
    </subcellularLocation>
    <text evidence="5">Traffics to peroxisomes via the endolasmic reticulum (ER), where it accumulates in the absence of PEX19.</text>
</comment>
<comment type="induction">
    <text evidence="3">Expression is induced in the presence of oleic acid or methanol.</text>
</comment>
<comment type="disruption phenotype">
    <text evidence="4 9">Leads to a peroxisomal-deficient phenotype and mislocalization in the cytosol of peroxisomal matrix proteins (PubMed:8702562). Affects the assembly of the peroxisomal translocation complex and impairs the interaction between the peroxisomal docking complex and the peroxisomal translocation complex (PubMed:12121419).</text>
</comment>
<comment type="similarity">
    <text evidence="12">Belongs to the peroxin-3 family.</text>
</comment>
<protein>
    <recommendedName>
        <fullName evidence="10">Peroxisomal membrane protein PEX3</fullName>
        <shortName evidence="10">PMP PEX3</shortName>
    </recommendedName>
    <alternativeName>
        <fullName evidence="10">Peroxin-3</fullName>
    </alternativeName>
    <alternativeName>
        <fullName evidence="11">Peroxisomal membrane protein PAS2</fullName>
    </alternativeName>
</protein>
<gene>
    <name evidence="10" type="primary">PEX3</name>
    <name evidence="11" type="synonym">PAS2</name>
    <name type="ordered locus">PAS_chr3_1073</name>
</gene>
<name>PEX3_KOMPG</name>
<proteinExistence type="evidence at protein level"/>
<reference key="1">
    <citation type="journal article" date="2009" name="Nat. Biotechnol.">
        <title>Genome sequence of the recombinant protein production host Pichia pastoris.</title>
        <authorList>
            <person name="De Schutter K."/>
            <person name="Lin Y.-C."/>
            <person name="Tiels P."/>
            <person name="Van Hecke A."/>
            <person name="Glinka S."/>
            <person name="Weber-Lehmann J."/>
            <person name="Rouze P."/>
            <person name="Van de Peer Y."/>
            <person name="Callewaert N."/>
        </authorList>
    </citation>
    <scope>NUCLEOTIDE SEQUENCE [LARGE SCALE GENOMIC DNA]</scope>
    <source>
        <strain>GS115 / ATCC 20864</strain>
    </source>
</reference>
<reference key="2">
    <citation type="journal article" date="1996" name="J. Biol. Chem.">
        <title>Isolation and characterization of Pas2p, a peroxisomal membrane protein essential for peroxisome biogenesis in the methylotrophic yeast Pichia pastoris.</title>
        <authorList>
            <person name="Wiemer E.A."/>
            <person name="Lueers G.H."/>
            <person name="Faber K.N."/>
            <person name="Wenzel T."/>
            <person name="Veenhuis M."/>
            <person name="Subramani S."/>
        </authorList>
    </citation>
    <scope>FUNCTION</scope>
    <scope>DISRUPTION PHENOTYPE</scope>
    <scope>SUBCELLULAR LOCATION</scope>
</reference>
<reference key="3">
    <citation type="journal article" date="1999" name="Mol. Biol. Cell">
        <title>Pex19p interacts with Pex3p and Pex10p and is essential for peroxisome biogenesis in Pichia pastoris.</title>
        <authorList>
            <person name="Snyder W.B."/>
            <person name="Faber K.N."/>
            <person name="Wenzel T.J."/>
            <person name="Koller A."/>
            <person name="Lueers G.H."/>
            <person name="Rangell L."/>
            <person name="Keller G.A."/>
            <person name="Subramani S."/>
        </authorList>
    </citation>
    <scope>FUNCTION</scope>
    <scope>INDUCTION</scope>
    <scope>SUBCELLULAR LOCATION</scope>
    <scope>INTERACTION WITH PEX19</scope>
</reference>
<reference key="4">
    <citation type="journal article" date="2002" name="Traffic">
        <title>Peroxisome remnants in pex3delta cells and the requirement of Pex3p for interactions between the peroxisomal docking and translocation subcomplexes.</title>
        <authorList>
            <person name="Hazra P.P."/>
            <person name="Suriapranata I."/>
            <person name="Snyder W.B."/>
            <person name="Subramani S."/>
        </authorList>
    </citation>
    <scope>FUNCTION</scope>
    <scope>SUBUNIT</scope>
    <scope>DISRUPTION PHENOTYPE</scope>
</reference>
<reference key="5">
    <citation type="journal article" date="2011" name="Proc. Natl. Acad. Sci. U.S.A.">
        <title>Cell-free sorting of peroxisomal membrane proteins from the endoplasmic reticulum.</title>
        <authorList>
            <person name="Agrawal G."/>
            <person name="Joshi S."/>
            <person name="Subramani S."/>
        </authorList>
    </citation>
    <scope>SUBCELLULAR LOCATION</scope>
</reference>
<reference key="6">
    <citation type="journal article" date="2015" name="J. Biol. Chem.">
        <title>Peroxisomal Pex3 activates selective autophagy of peroxisomes via interaction with the pexophagy receptor Atg30.</title>
        <authorList>
            <person name="Burnett S.F."/>
            <person name="Farre J.C."/>
            <person name="Nazarko T.Y."/>
            <person name="Subramani S."/>
        </authorList>
    </citation>
    <scope>FUNCTION</scope>
    <scope>INTERACTION WITH ATG30</scope>
</reference>
<reference key="7">
    <citation type="journal article" date="2017" name="J. Biol. Chem.">
        <title>Functional regions of the peroxin Pex19 necessary for peroxisome biogenesis.</title>
        <authorList>
            <person name="Agrawal G."/>
            <person name="Shang H.H."/>
            <person name="Xia Z.J."/>
            <person name="Subramani S."/>
        </authorList>
    </citation>
    <scope>INTERACTION WITH PEX19</scope>
</reference>
<reference key="8">
    <citation type="journal article" date="2018" name="Autophagy">
        <title>Pex3 and Atg37 compete to regulate the interaction between the pexophagy receptor, Atg30, and the Hrr25 kinase.</title>
        <authorList>
            <person name="Zientara-Rytter K."/>
            <person name="Ozeki K."/>
            <person name="Nazarko T.Y."/>
            <person name="Subramani S."/>
        </authorList>
    </citation>
    <scope>FUNCTION</scope>
    <scope>INTERACTION WITH ATG30</scope>
</reference>